<keyword id="KW-0903">Direct protein sequencing</keyword>
<keyword id="KW-0488">Methylation</keyword>
<keyword id="KW-0687">Ribonucleoprotein</keyword>
<keyword id="KW-0689">Ribosomal protein</keyword>
<accession>P07472</accession>
<comment type="function">
    <text>Seems to be the binding site for several of the factors involved in protein synthesis and appears to be essential for accurate translation.</text>
</comment>
<comment type="function">
    <text evidence="1">Forms part of the ribosomal stalk which helps the ribosome interact with GTP-bound translation factors. Is thus essential for accurate translation.</text>
</comment>
<comment type="subunit">
    <text evidence="1">Homodimer. Part of the ribosomal stalk of the 50S ribosomal subunit. Forms a multimeric L10(L12)X complex, where L10 forms an elongated spine to which 2 to 4 L12 dimers bind in a sequential fashion. Binds GTP-bound translation factors.</text>
</comment>
<comment type="similarity">
    <text evidence="1">Belongs to the bacterial ribosomal protein bL12 family.</text>
</comment>
<sequence>MALTQEDIINAVAEMSVMEVAELVSAMEEKFGVSAAAAVVAGPGGGEAEEAEEQTEFDLVLTSAGEKKVNVIKVVREITGLGLKEAKAAVDGAPATLKEGMSKEDGDEAKTKLEEAGASVELK</sequence>
<protein>
    <recommendedName>
        <fullName evidence="1">Large ribosomal subunit protein bL12</fullName>
    </recommendedName>
    <alternativeName>
        <fullName evidence="5">50S ribosomal protein L7/L12</fullName>
    </alternativeName>
    <alternativeName>
        <fullName>Ribosomal protein 'A'</fullName>
    </alternativeName>
</protein>
<feature type="initiator methionine" description="Removed" evidence="3 4">
    <location>
        <position position="1"/>
    </location>
</feature>
<feature type="chain" id="PRO_0000157534" description="Large ribosomal subunit protein bL12">
    <location>
        <begin position="2"/>
        <end position="123"/>
    </location>
</feature>
<feature type="region of interest" description="Disordered" evidence="2">
    <location>
        <begin position="94"/>
        <end position="123"/>
    </location>
</feature>
<feature type="compositionally biased region" description="Basic and acidic residues" evidence="2">
    <location>
        <begin position="100"/>
        <end position="115"/>
    </location>
</feature>
<feature type="modified residue" description="N6-methyllysine" evidence="4">
    <location>
        <position position="84"/>
    </location>
</feature>
<dbReference type="PIR" id="A24753">
    <property type="entry name" value="A24753"/>
</dbReference>
<dbReference type="SMR" id="P07472"/>
<dbReference type="iPTMnet" id="P07472"/>
<dbReference type="GO" id="GO:0022625">
    <property type="term" value="C:cytosolic large ribosomal subunit"/>
    <property type="evidence" value="ECO:0007669"/>
    <property type="project" value="TreeGrafter"/>
</dbReference>
<dbReference type="GO" id="GO:0003729">
    <property type="term" value="F:mRNA binding"/>
    <property type="evidence" value="ECO:0007669"/>
    <property type="project" value="TreeGrafter"/>
</dbReference>
<dbReference type="GO" id="GO:0003735">
    <property type="term" value="F:structural constituent of ribosome"/>
    <property type="evidence" value="ECO:0007669"/>
    <property type="project" value="InterPro"/>
</dbReference>
<dbReference type="GO" id="GO:0006412">
    <property type="term" value="P:translation"/>
    <property type="evidence" value="ECO:0007669"/>
    <property type="project" value="UniProtKB-UniRule"/>
</dbReference>
<dbReference type="CDD" id="cd00387">
    <property type="entry name" value="Ribosomal_L7_L12"/>
    <property type="match status" value="1"/>
</dbReference>
<dbReference type="FunFam" id="3.30.1390.10:FF:000001">
    <property type="entry name" value="50S ribosomal protein L7/L12"/>
    <property type="match status" value="1"/>
</dbReference>
<dbReference type="Gene3D" id="3.30.1390.10">
    <property type="match status" value="1"/>
</dbReference>
<dbReference type="Gene3D" id="1.20.5.710">
    <property type="entry name" value="Single helix bin"/>
    <property type="match status" value="1"/>
</dbReference>
<dbReference type="HAMAP" id="MF_00368">
    <property type="entry name" value="Ribosomal_bL12"/>
    <property type="match status" value="1"/>
</dbReference>
<dbReference type="InterPro" id="IPR000206">
    <property type="entry name" value="Ribosomal_bL12"/>
</dbReference>
<dbReference type="InterPro" id="IPR013823">
    <property type="entry name" value="Ribosomal_bL12_C"/>
</dbReference>
<dbReference type="InterPro" id="IPR014719">
    <property type="entry name" value="Ribosomal_bL12_C/ClpS-like"/>
</dbReference>
<dbReference type="InterPro" id="IPR008932">
    <property type="entry name" value="Ribosomal_bL12_oligo"/>
</dbReference>
<dbReference type="InterPro" id="IPR036235">
    <property type="entry name" value="Ribosomal_bL12_oligo_N_sf"/>
</dbReference>
<dbReference type="NCBIfam" id="TIGR00855">
    <property type="entry name" value="L12"/>
    <property type="match status" value="1"/>
</dbReference>
<dbReference type="PANTHER" id="PTHR45987">
    <property type="entry name" value="39S RIBOSOMAL PROTEIN L12"/>
    <property type="match status" value="1"/>
</dbReference>
<dbReference type="PANTHER" id="PTHR45987:SF4">
    <property type="entry name" value="LARGE RIBOSOMAL SUBUNIT PROTEIN BL12M"/>
    <property type="match status" value="1"/>
</dbReference>
<dbReference type="Pfam" id="PF00542">
    <property type="entry name" value="Ribosomal_L12"/>
    <property type="match status" value="1"/>
</dbReference>
<dbReference type="Pfam" id="PF16320">
    <property type="entry name" value="Ribosomal_L12_N"/>
    <property type="match status" value="1"/>
</dbReference>
<dbReference type="SUPFAM" id="SSF54736">
    <property type="entry name" value="ClpS-like"/>
    <property type="match status" value="1"/>
</dbReference>
<dbReference type="SUPFAM" id="SSF48300">
    <property type="entry name" value="Ribosomal protein L7/12, oligomerisation (N-terminal) domain"/>
    <property type="match status" value="1"/>
</dbReference>
<reference key="1">
    <citation type="journal article" date="1986" name="Biochem. Cell Biol.">
        <title>The primary structure of the ribosomal A-protein (L12) from the moderate halophile NRCC 41227.</title>
        <authorList>
            <person name="Falkenberg P."/>
            <person name="Yaguchi M."/>
            <person name="Roy C."/>
            <person name="Zuker M."/>
            <person name="Matheson A.T."/>
        </authorList>
    </citation>
    <scope>PROTEIN SEQUENCE OF 2-123</scope>
</reference>
<reference key="2">
    <citation type="journal article" date="1979" name="Biochim. Biophys. Acta">
        <title>The N-terminal sequence of the ribosomal 'A' protein from two moderate halophiles, Vibrio costicola and an unidentified moderate (NRCC 11227).</title>
        <authorList>
            <person name="Falkenberg P."/>
            <person name="Yaguchi M."/>
            <person name="Rollin C.F."/>
            <person name="Matheson A.T."/>
            <person name="Wydro R."/>
        </authorList>
    </citation>
    <scope>PROTEIN SEQUENCE OF 2-39</scope>
    <scope>METHYLATION AT LYS-84</scope>
</reference>
<organism>
    <name type="scientific">Halophilic eubacterium NRCC 41227</name>
    <dbReference type="NCBI Taxonomy" id="27"/>
    <lineage>
        <taxon>Bacteria</taxon>
    </lineage>
</organism>
<gene>
    <name evidence="1" type="primary">rplL</name>
</gene>
<evidence type="ECO:0000255" key="1">
    <source>
        <dbReference type="HAMAP-Rule" id="MF_00368"/>
    </source>
</evidence>
<evidence type="ECO:0000256" key="2">
    <source>
        <dbReference type="SAM" id="MobiDB-lite"/>
    </source>
</evidence>
<evidence type="ECO:0000269" key="3">
    <source>
    </source>
</evidence>
<evidence type="ECO:0000269" key="4">
    <source>
    </source>
</evidence>
<evidence type="ECO:0000305" key="5"/>
<name>RL7_HALEU</name>
<proteinExistence type="evidence at protein level"/>